<organism>
    <name type="scientific">Bacillus subtilis (strain 168)</name>
    <dbReference type="NCBI Taxonomy" id="224308"/>
    <lineage>
        <taxon>Bacteria</taxon>
        <taxon>Bacillati</taxon>
        <taxon>Bacillota</taxon>
        <taxon>Bacilli</taxon>
        <taxon>Bacillales</taxon>
        <taxon>Bacillaceae</taxon>
        <taxon>Bacillus</taxon>
    </lineage>
</organism>
<accession>P15378</accession>
<reference key="1">
    <citation type="journal article" date="1989" name="J. Bacteriol.">
        <title>Molecular cloning and characterization of comC, a late competence gene of Bacillus subtilis.</title>
        <authorList>
            <person name="Mohan S."/>
            <person name="Aghion J."/>
            <person name="Guillen N."/>
            <person name="Dubnau D.A."/>
        </authorList>
    </citation>
    <scope>NUCLEOTIDE SEQUENCE [GENOMIC DNA]</scope>
</reference>
<reference key="2">
    <citation type="journal article" date="1997" name="Nature">
        <title>The complete genome sequence of the Gram-positive bacterium Bacillus subtilis.</title>
        <authorList>
            <person name="Kunst F."/>
            <person name="Ogasawara N."/>
            <person name="Moszer I."/>
            <person name="Albertini A.M."/>
            <person name="Alloni G."/>
            <person name="Azevedo V."/>
            <person name="Bertero M.G."/>
            <person name="Bessieres P."/>
            <person name="Bolotin A."/>
            <person name="Borchert S."/>
            <person name="Borriss R."/>
            <person name="Boursier L."/>
            <person name="Brans A."/>
            <person name="Braun M."/>
            <person name="Brignell S.C."/>
            <person name="Bron S."/>
            <person name="Brouillet S."/>
            <person name="Bruschi C.V."/>
            <person name="Caldwell B."/>
            <person name="Capuano V."/>
            <person name="Carter N.M."/>
            <person name="Choi S.-K."/>
            <person name="Codani J.-J."/>
            <person name="Connerton I.F."/>
            <person name="Cummings N.J."/>
            <person name="Daniel R.A."/>
            <person name="Denizot F."/>
            <person name="Devine K.M."/>
            <person name="Duesterhoeft A."/>
            <person name="Ehrlich S.D."/>
            <person name="Emmerson P.T."/>
            <person name="Entian K.-D."/>
            <person name="Errington J."/>
            <person name="Fabret C."/>
            <person name="Ferrari E."/>
            <person name="Foulger D."/>
            <person name="Fritz C."/>
            <person name="Fujita M."/>
            <person name="Fujita Y."/>
            <person name="Fuma S."/>
            <person name="Galizzi A."/>
            <person name="Galleron N."/>
            <person name="Ghim S.-Y."/>
            <person name="Glaser P."/>
            <person name="Goffeau A."/>
            <person name="Golightly E.J."/>
            <person name="Grandi G."/>
            <person name="Guiseppi G."/>
            <person name="Guy B.J."/>
            <person name="Haga K."/>
            <person name="Haiech J."/>
            <person name="Harwood C.R."/>
            <person name="Henaut A."/>
            <person name="Hilbert H."/>
            <person name="Holsappel S."/>
            <person name="Hosono S."/>
            <person name="Hullo M.-F."/>
            <person name="Itaya M."/>
            <person name="Jones L.-M."/>
            <person name="Joris B."/>
            <person name="Karamata D."/>
            <person name="Kasahara Y."/>
            <person name="Klaerr-Blanchard M."/>
            <person name="Klein C."/>
            <person name="Kobayashi Y."/>
            <person name="Koetter P."/>
            <person name="Koningstein G."/>
            <person name="Krogh S."/>
            <person name="Kumano M."/>
            <person name="Kurita K."/>
            <person name="Lapidus A."/>
            <person name="Lardinois S."/>
            <person name="Lauber J."/>
            <person name="Lazarevic V."/>
            <person name="Lee S.-M."/>
            <person name="Levine A."/>
            <person name="Liu H."/>
            <person name="Masuda S."/>
            <person name="Mauel C."/>
            <person name="Medigue C."/>
            <person name="Medina N."/>
            <person name="Mellado R.P."/>
            <person name="Mizuno M."/>
            <person name="Moestl D."/>
            <person name="Nakai S."/>
            <person name="Noback M."/>
            <person name="Noone D."/>
            <person name="O'Reilly M."/>
            <person name="Ogawa K."/>
            <person name="Ogiwara A."/>
            <person name="Oudega B."/>
            <person name="Park S.-H."/>
            <person name="Parro V."/>
            <person name="Pohl T.M."/>
            <person name="Portetelle D."/>
            <person name="Porwollik S."/>
            <person name="Prescott A.M."/>
            <person name="Presecan E."/>
            <person name="Pujic P."/>
            <person name="Purnelle B."/>
            <person name="Rapoport G."/>
            <person name="Rey M."/>
            <person name="Reynolds S."/>
            <person name="Rieger M."/>
            <person name="Rivolta C."/>
            <person name="Rocha E."/>
            <person name="Roche B."/>
            <person name="Rose M."/>
            <person name="Sadaie Y."/>
            <person name="Sato T."/>
            <person name="Scanlan E."/>
            <person name="Schleich S."/>
            <person name="Schroeter R."/>
            <person name="Scoffone F."/>
            <person name="Sekiguchi J."/>
            <person name="Sekowska A."/>
            <person name="Seror S.J."/>
            <person name="Serror P."/>
            <person name="Shin B.-S."/>
            <person name="Soldo B."/>
            <person name="Sorokin A."/>
            <person name="Tacconi E."/>
            <person name="Takagi T."/>
            <person name="Takahashi H."/>
            <person name="Takemaru K."/>
            <person name="Takeuchi M."/>
            <person name="Tamakoshi A."/>
            <person name="Tanaka T."/>
            <person name="Terpstra P."/>
            <person name="Tognoni A."/>
            <person name="Tosato V."/>
            <person name="Uchiyama S."/>
            <person name="Vandenbol M."/>
            <person name="Vannier F."/>
            <person name="Vassarotti A."/>
            <person name="Viari A."/>
            <person name="Wambutt R."/>
            <person name="Wedler E."/>
            <person name="Wedler H."/>
            <person name="Weitzenegger T."/>
            <person name="Winters P."/>
            <person name="Wipat A."/>
            <person name="Yamamoto H."/>
            <person name="Yamane K."/>
            <person name="Yasumoto K."/>
            <person name="Yata K."/>
            <person name="Yoshida K."/>
            <person name="Yoshikawa H.-F."/>
            <person name="Zumstein E."/>
            <person name="Yoshikawa H."/>
            <person name="Danchin A."/>
        </authorList>
    </citation>
    <scope>NUCLEOTIDE SEQUENCE [LARGE SCALE GENOMIC DNA]</scope>
    <source>
        <strain>168</strain>
    </source>
</reference>
<reference key="3">
    <citation type="journal article" date="2009" name="Microbiology">
        <title>From a consortium sequence to a unified sequence: the Bacillus subtilis 168 reference genome a decade later.</title>
        <authorList>
            <person name="Barbe V."/>
            <person name="Cruveiller S."/>
            <person name="Kunst F."/>
            <person name="Lenoble P."/>
            <person name="Meurice G."/>
            <person name="Sekowska A."/>
            <person name="Vallenet D."/>
            <person name="Wang T."/>
            <person name="Moszer I."/>
            <person name="Medigue C."/>
            <person name="Danchin A."/>
        </authorList>
    </citation>
    <scope>SEQUENCE REVISION TO 206</scope>
</reference>
<reference key="4">
    <citation type="journal article" date="1993" name="J. Bacteriol.">
        <title>Sporulation gene spoIIB from Bacillus subtilis.</title>
        <authorList>
            <person name="Margolis P.S."/>
            <person name="Driks A."/>
            <person name="Losick R."/>
        </authorList>
    </citation>
    <scope>NUCLEOTIDE SEQUENCE [GENOMIC DNA] OF 1-46 AND 181-248</scope>
    <source>
        <strain>168 / PY79</strain>
    </source>
</reference>
<dbReference type="EC" id="3.4.23.43" evidence="1"/>
<dbReference type="EC" id="2.1.1.-" evidence="1"/>
<dbReference type="EMBL" id="M30805">
    <property type="protein sequence ID" value="AAA83365.1"/>
    <property type="molecule type" value="Genomic_DNA"/>
</dbReference>
<dbReference type="EMBL" id="AL009126">
    <property type="protein sequence ID" value="CAB14767.2"/>
    <property type="molecule type" value="Genomic_DNA"/>
</dbReference>
<dbReference type="EMBL" id="L04520">
    <property type="protein sequence ID" value="AAB59022.1"/>
    <property type="molecule type" value="Genomic_DNA"/>
</dbReference>
<dbReference type="EMBL" id="L04519">
    <property type="protein sequence ID" value="AAB59025.1"/>
    <property type="molecule type" value="Genomic_DNA"/>
</dbReference>
<dbReference type="PIR" id="A33490">
    <property type="entry name" value="A33490"/>
</dbReference>
<dbReference type="RefSeq" id="NP_390685.2">
    <property type="nucleotide sequence ID" value="NC_000964.3"/>
</dbReference>
<dbReference type="RefSeq" id="WP_010886586.1">
    <property type="nucleotide sequence ID" value="NZ_OZ025638.1"/>
</dbReference>
<dbReference type="FunCoup" id="P15378">
    <property type="interactions" value="441"/>
</dbReference>
<dbReference type="STRING" id="224308.BSU28070"/>
<dbReference type="MEROPS" id="A24.019"/>
<dbReference type="PaxDb" id="224308-BSU28070"/>
<dbReference type="EnsemblBacteria" id="CAB14767">
    <property type="protein sequence ID" value="CAB14767"/>
    <property type="gene ID" value="BSU_28070"/>
</dbReference>
<dbReference type="GeneID" id="936586"/>
<dbReference type="KEGG" id="bsu:BSU28070"/>
<dbReference type="PATRIC" id="fig|224308.43.peg.2932"/>
<dbReference type="eggNOG" id="COG1989">
    <property type="taxonomic scope" value="Bacteria"/>
</dbReference>
<dbReference type="InParanoid" id="P15378"/>
<dbReference type="OrthoDB" id="9789291at2"/>
<dbReference type="PhylomeDB" id="P15378"/>
<dbReference type="BioCyc" id="BSUB:BSU28070-MONOMER"/>
<dbReference type="Proteomes" id="UP000001570">
    <property type="component" value="Chromosome"/>
</dbReference>
<dbReference type="GO" id="GO:0005886">
    <property type="term" value="C:plasma membrane"/>
    <property type="evidence" value="ECO:0000318"/>
    <property type="project" value="GO_Central"/>
</dbReference>
<dbReference type="GO" id="GO:0004190">
    <property type="term" value="F:aspartic-type endopeptidase activity"/>
    <property type="evidence" value="ECO:0000318"/>
    <property type="project" value="GO_Central"/>
</dbReference>
<dbReference type="GO" id="GO:0046872">
    <property type="term" value="F:metal ion binding"/>
    <property type="evidence" value="ECO:0007669"/>
    <property type="project" value="UniProtKB-KW"/>
</dbReference>
<dbReference type="GO" id="GO:0008168">
    <property type="term" value="F:methyltransferase activity"/>
    <property type="evidence" value="ECO:0007669"/>
    <property type="project" value="UniProtKB-KW"/>
</dbReference>
<dbReference type="GO" id="GO:0030420">
    <property type="term" value="P:establishment of competence for transformation"/>
    <property type="evidence" value="ECO:0007669"/>
    <property type="project" value="UniProtKB-KW"/>
</dbReference>
<dbReference type="GO" id="GO:0032259">
    <property type="term" value="P:methylation"/>
    <property type="evidence" value="ECO:0007669"/>
    <property type="project" value="UniProtKB-KW"/>
</dbReference>
<dbReference type="GO" id="GO:0006465">
    <property type="term" value="P:signal peptide processing"/>
    <property type="evidence" value="ECO:0000318"/>
    <property type="project" value="GO_Central"/>
</dbReference>
<dbReference type="GO" id="GO:0030435">
    <property type="term" value="P:sporulation resulting in formation of a cellular spore"/>
    <property type="evidence" value="ECO:0007669"/>
    <property type="project" value="UniProtKB-KW"/>
</dbReference>
<dbReference type="FunFam" id="1.20.120.1220:FF:000014">
    <property type="entry name" value="ComC processing protease Leader peptidase / N-methyltransferase"/>
    <property type="match status" value="1"/>
</dbReference>
<dbReference type="Gene3D" id="1.20.120.1220">
    <property type="match status" value="1"/>
</dbReference>
<dbReference type="InterPro" id="IPR000045">
    <property type="entry name" value="Prepilin_IV_endopep_pep"/>
</dbReference>
<dbReference type="InterPro" id="IPR010627">
    <property type="entry name" value="Prepilin_pept_A24_N"/>
</dbReference>
<dbReference type="InterPro" id="IPR050882">
    <property type="entry name" value="Prepilin_peptidase/N-MTase"/>
</dbReference>
<dbReference type="PANTHER" id="PTHR30487:SF0">
    <property type="entry name" value="PREPILIN LEADER PEPTIDASE_N-METHYLTRANSFERASE-RELATED"/>
    <property type="match status" value="1"/>
</dbReference>
<dbReference type="PANTHER" id="PTHR30487">
    <property type="entry name" value="TYPE 4 PREPILIN-LIKE PROTEINS LEADER PEPTIDE-PROCESSING ENZYME"/>
    <property type="match status" value="1"/>
</dbReference>
<dbReference type="Pfam" id="PF06750">
    <property type="entry name" value="A24_N_bact"/>
    <property type="match status" value="1"/>
</dbReference>
<dbReference type="Pfam" id="PF01478">
    <property type="entry name" value="Peptidase_A24"/>
    <property type="match status" value="1"/>
</dbReference>
<comment type="function">
    <text evidence="2">Plays a role in type II pseudopili formation by proteolytically removing the leader sequence from substrate proteins and subsequently monomethylating the alpha-amino group of the newly exposed N-terminal phenylalanine. Substrates include proteins required for biogenesis of the type II general secretory apparatus.</text>
</comment>
<comment type="catalytic activity">
    <reaction evidence="1">
        <text>Typically cleaves a -Gly-|-Phe- bond to release an N-terminal, basic peptide of 5-8 residues from type IV prepilin, and then N-methylates the new N-terminal amino group, the methyl donor being S-adenosyl-L-methionine.</text>
        <dbReference type="EC" id="3.4.23.43"/>
    </reaction>
</comment>
<comment type="cofactor">
    <cofactor evidence="1">
        <name>Zn(2+)</name>
        <dbReference type="ChEBI" id="CHEBI:29105"/>
    </cofactor>
    <text evidence="1">Zinc is required for the N-terminal methylation of the mature pilin, but not for signal peptide cleavage.</text>
</comment>
<comment type="subcellular location">
    <subcellularLocation>
        <location evidence="1">Cell membrane</location>
        <topology evidence="1">Multi-pass membrane protein</topology>
    </subcellularLocation>
</comment>
<comment type="induction">
    <text>By several proteins including Spo0A, Spo0H, Sin, AbrB, DegS, DegU, ComA, ComB and ComK.</text>
</comment>
<comment type="similarity">
    <text evidence="4">Belongs to the peptidase A24 family.</text>
</comment>
<gene>
    <name type="primary">comC</name>
    <name type="ordered locus">BSU28070</name>
</gene>
<evidence type="ECO:0000250" key="1">
    <source>
        <dbReference type="UniProtKB" id="P22610"/>
    </source>
</evidence>
<evidence type="ECO:0000250" key="2">
    <source>
        <dbReference type="UniProtKB" id="P25960"/>
    </source>
</evidence>
<evidence type="ECO:0000255" key="3"/>
<evidence type="ECO:0000305" key="4"/>
<protein>
    <recommendedName>
        <fullName>Prepilin leader peptidase/N-methyltransferase</fullName>
    </recommendedName>
    <alternativeName>
        <fullName>Late competence protein ComC</fullName>
    </alternativeName>
    <domain>
        <recommendedName>
            <fullName>Leader peptidase</fullName>
            <ecNumber evidence="1">3.4.23.43</ecNumber>
        </recommendedName>
        <alternativeName>
            <fullName>Prepilin peptidase</fullName>
        </alternativeName>
    </domain>
    <domain>
        <recommendedName>
            <fullName>N-methyltransferase</fullName>
            <ecNumber evidence="1">2.1.1.-</ecNumber>
        </recommendedName>
    </domain>
</protein>
<keyword id="KW-1003">Cell membrane</keyword>
<keyword id="KW-0178">Competence</keyword>
<keyword id="KW-0378">Hydrolase</keyword>
<keyword id="KW-0472">Membrane</keyword>
<keyword id="KW-0479">Metal-binding</keyword>
<keyword id="KW-0489">Methyltransferase</keyword>
<keyword id="KW-0511">Multifunctional enzyme</keyword>
<keyword id="KW-0645">Protease</keyword>
<keyword id="KW-1185">Reference proteome</keyword>
<keyword id="KW-0949">S-adenosyl-L-methionine</keyword>
<keyword id="KW-0749">Sporulation</keyword>
<keyword id="KW-0808">Transferase</keyword>
<keyword id="KW-0812">Transmembrane</keyword>
<keyword id="KW-1133">Transmembrane helix</keyword>
<keyword id="KW-0862">Zinc</keyword>
<proteinExistence type="evidence at transcript level"/>
<name>LEP4_BACSU</name>
<sequence length="248" mass="26435">MLSILFIFGLILGSFYYTAGCRIPLHLSIIAPRSSCPFCRRTLTPAELIPILSFLFQKGKCKSCGHRISFMYPAAELVTACLFAAAGIRFGISLELFPAVVFISLLIIVAVTDIHFMLIPNRILIFFLPFLAAARLISPLDSWYAGLLGAAAGFLFLAVIAAITHGGVGGGDIKLFAVIGFVLGVKMLAAAFFFSVLIGALYGAAAVLTGRLAKRQPLPFAPAIAAGSILAYLYGDSIISFYIKMALG</sequence>
<feature type="chain" id="PRO_0000192616" description="Prepilin leader peptidase/N-methyltransferase">
    <location>
        <begin position="1"/>
        <end position="248"/>
    </location>
</feature>
<feature type="transmembrane region" description="Helical" evidence="3">
    <location>
        <begin position="1"/>
        <end position="21"/>
    </location>
</feature>
<feature type="transmembrane region" description="Helical" evidence="3">
    <location>
        <begin position="68"/>
        <end position="88"/>
    </location>
</feature>
<feature type="transmembrane region" description="Helical" evidence="3">
    <location>
        <begin position="90"/>
        <end position="110"/>
    </location>
</feature>
<feature type="transmembrane region" description="Helical" evidence="3">
    <location>
        <begin position="114"/>
        <end position="134"/>
    </location>
</feature>
<feature type="transmembrane region" description="Helical" evidence="3">
    <location>
        <begin position="143"/>
        <end position="163"/>
    </location>
</feature>
<feature type="transmembrane region" description="Helical" evidence="3">
    <location>
        <begin position="178"/>
        <end position="198"/>
    </location>
</feature>
<feature type="transmembrane region" description="Helical" evidence="3">
    <location>
        <begin position="223"/>
        <end position="243"/>
    </location>
</feature>
<feature type="binding site" evidence="1">
    <location>
        <position position="36"/>
    </location>
    <ligand>
        <name>Zn(2+)</name>
        <dbReference type="ChEBI" id="CHEBI:29105"/>
    </ligand>
</feature>
<feature type="binding site" evidence="1">
    <location>
        <position position="39"/>
    </location>
    <ligand>
        <name>Zn(2+)</name>
        <dbReference type="ChEBI" id="CHEBI:29105"/>
    </ligand>
</feature>
<feature type="binding site" evidence="1">
    <location>
        <position position="61"/>
    </location>
    <ligand>
        <name>Zn(2+)</name>
        <dbReference type="ChEBI" id="CHEBI:29105"/>
    </ligand>
</feature>
<feature type="binding site" evidence="1">
    <location>
        <position position="64"/>
    </location>
    <ligand>
        <name>Zn(2+)</name>
        <dbReference type="ChEBI" id="CHEBI:29105"/>
    </ligand>
</feature>
<feature type="sequence conflict" description="In Ref. 1; AAA83365 and 4; AAB59025." evidence="4" ref="1 4">
    <original>A</original>
    <variation>R</variation>
    <location>
        <position position="206"/>
    </location>
</feature>